<keyword id="KW-0067">ATP-binding</keyword>
<keyword id="KW-0436">Ligase</keyword>
<keyword id="KW-0474">Menaquinone biosynthesis</keyword>
<keyword id="KW-0547">Nucleotide-binding</keyword>
<name>MENE_BACVZ</name>
<sequence>MLTEQPNWLIQRAQLTPERIALIFENKQMTFRELYHASKQMAARLSKYCSLKKGDRAAILLSNRPEMVYAVHACFLLGAEAVLLNTKLSKQERLFQLEDSQAKLLLMEDGFCREEYESAVATADVDELQAEEAGDIEPEAYVTLDDTATLMYTSGTTGRPKGVQQTFGNHYSSAVSSALNLGVTERDRWLIALPLFHISGLSALFKSVIYGMPVVLHQKFSVTDVLDSISSHQVTIISAVQTMLSGLLAETEQCPESLRCILLGGGPAPLPLLEECRRKQFPVFQSYGLTETCSQIVTLSPEFSMDKLGSAGKPLFSCEIRIEKDGNPCAPFEHGEITVKGPNVMKGYYHRDDANQAAFHNGWFKTGDLGYLDDEGFLYVLDRRSDLIISGGENIYPAEVEAALLAHPAVAEAGVSGSEDPKWGKVPHAFLVLTSSVSSEELTAFCRERLAKYKIPAAFFEVDGLPRNASNKLMRHRLNELRKGELS</sequence>
<organism>
    <name type="scientific">Bacillus velezensis (strain DSM 23117 / BGSC 10A6 / LMG 26770 / FZB42)</name>
    <name type="common">Bacillus amyloliquefaciens subsp. plantarum</name>
    <dbReference type="NCBI Taxonomy" id="326423"/>
    <lineage>
        <taxon>Bacteria</taxon>
        <taxon>Bacillati</taxon>
        <taxon>Bacillota</taxon>
        <taxon>Bacilli</taxon>
        <taxon>Bacillales</taxon>
        <taxon>Bacillaceae</taxon>
        <taxon>Bacillus</taxon>
        <taxon>Bacillus amyloliquefaciens group</taxon>
    </lineage>
</organism>
<evidence type="ECO:0000255" key="1">
    <source>
        <dbReference type="HAMAP-Rule" id="MF_00731"/>
    </source>
</evidence>
<protein>
    <recommendedName>
        <fullName evidence="1">2-succinylbenzoate--CoA ligase</fullName>
        <ecNumber evidence="1">6.2.1.26</ecNumber>
    </recommendedName>
    <alternativeName>
        <fullName evidence="1">o-succinylbenzoyl-CoA synthetase</fullName>
        <shortName evidence="1">OSB-CoA synthetase</shortName>
    </alternativeName>
</protein>
<comment type="function">
    <text evidence="1">Converts 2-succinylbenzoate (OSB) to 2-succinylbenzoyl-CoA (OSB-CoA).</text>
</comment>
<comment type="catalytic activity">
    <reaction evidence="1">
        <text>2-succinylbenzoate + ATP + CoA = 2-succinylbenzoyl-CoA + AMP + diphosphate</text>
        <dbReference type="Rhea" id="RHEA:17009"/>
        <dbReference type="ChEBI" id="CHEBI:18325"/>
        <dbReference type="ChEBI" id="CHEBI:30616"/>
        <dbReference type="ChEBI" id="CHEBI:33019"/>
        <dbReference type="ChEBI" id="CHEBI:57287"/>
        <dbReference type="ChEBI" id="CHEBI:57364"/>
        <dbReference type="ChEBI" id="CHEBI:456215"/>
        <dbReference type="EC" id="6.2.1.26"/>
    </reaction>
</comment>
<comment type="pathway">
    <text evidence="1">Quinol/quinone metabolism; 1,4-dihydroxy-2-naphthoate biosynthesis; 1,4-dihydroxy-2-naphthoate from chorismate: step 5/7.</text>
</comment>
<comment type="pathway">
    <text evidence="1">Quinol/quinone metabolism; menaquinone biosynthesis.</text>
</comment>
<comment type="similarity">
    <text evidence="1">Belongs to the ATP-dependent AMP-binding enzyme family. MenE subfamily.</text>
</comment>
<accession>A7Z809</accession>
<proteinExistence type="inferred from homology"/>
<reference key="1">
    <citation type="journal article" date="2007" name="Nat. Biotechnol.">
        <title>Comparative analysis of the complete genome sequence of the plant growth-promoting bacterium Bacillus amyloliquefaciens FZB42.</title>
        <authorList>
            <person name="Chen X.H."/>
            <person name="Koumoutsi A."/>
            <person name="Scholz R."/>
            <person name="Eisenreich A."/>
            <person name="Schneider K."/>
            <person name="Heinemeyer I."/>
            <person name="Morgenstern B."/>
            <person name="Voss B."/>
            <person name="Hess W.R."/>
            <person name="Reva O."/>
            <person name="Junge H."/>
            <person name="Voigt B."/>
            <person name="Jungblut P.R."/>
            <person name="Vater J."/>
            <person name="Suessmuth R."/>
            <person name="Liesegang H."/>
            <person name="Strittmatter A."/>
            <person name="Gottschalk G."/>
            <person name="Borriss R."/>
        </authorList>
    </citation>
    <scope>NUCLEOTIDE SEQUENCE [LARGE SCALE GENOMIC DNA]</scope>
    <source>
        <strain>DSM 23117 / BGSC 10A6 / LMG 26770 / FZB42</strain>
    </source>
</reference>
<feature type="chain" id="PRO_1000045961" description="2-succinylbenzoate--CoA ligase">
    <location>
        <begin position="1"/>
        <end position="487"/>
    </location>
</feature>
<dbReference type="EC" id="6.2.1.26" evidence="1"/>
<dbReference type="EMBL" id="CP000560">
    <property type="protein sequence ID" value="ABS75135.1"/>
    <property type="molecule type" value="Genomic_DNA"/>
</dbReference>
<dbReference type="RefSeq" id="WP_012118266.1">
    <property type="nucleotide sequence ID" value="NC_009725.2"/>
</dbReference>
<dbReference type="SMR" id="A7Z809"/>
<dbReference type="GeneID" id="93081918"/>
<dbReference type="KEGG" id="bay:RBAM_027770"/>
<dbReference type="HOGENOM" id="CLU_000022_59_0_9"/>
<dbReference type="UniPathway" id="UPA00079"/>
<dbReference type="UniPathway" id="UPA01057">
    <property type="reaction ID" value="UER00166"/>
</dbReference>
<dbReference type="Proteomes" id="UP000001120">
    <property type="component" value="Chromosome"/>
</dbReference>
<dbReference type="GO" id="GO:0005524">
    <property type="term" value="F:ATP binding"/>
    <property type="evidence" value="ECO:0007669"/>
    <property type="project" value="UniProtKB-KW"/>
</dbReference>
<dbReference type="GO" id="GO:0031956">
    <property type="term" value="F:medium-chain fatty acid-CoA ligase activity"/>
    <property type="evidence" value="ECO:0007669"/>
    <property type="project" value="TreeGrafter"/>
</dbReference>
<dbReference type="GO" id="GO:0008756">
    <property type="term" value="F:o-succinylbenzoate-CoA ligase activity"/>
    <property type="evidence" value="ECO:0007669"/>
    <property type="project" value="UniProtKB-UniRule"/>
</dbReference>
<dbReference type="GO" id="GO:0006631">
    <property type="term" value="P:fatty acid metabolic process"/>
    <property type="evidence" value="ECO:0007669"/>
    <property type="project" value="TreeGrafter"/>
</dbReference>
<dbReference type="GO" id="GO:0009234">
    <property type="term" value="P:menaquinone biosynthetic process"/>
    <property type="evidence" value="ECO:0007669"/>
    <property type="project" value="UniProtKB-UniRule"/>
</dbReference>
<dbReference type="CDD" id="cd05912">
    <property type="entry name" value="OSB_CoA_lg"/>
    <property type="match status" value="1"/>
</dbReference>
<dbReference type="Gene3D" id="3.30.300.30">
    <property type="match status" value="1"/>
</dbReference>
<dbReference type="Gene3D" id="3.40.50.12780">
    <property type="entry name" value="N-terminal domain of ligase-like"/>
    <property type="match status" value="1"/>
</dbReference>
<dbReference type="HAMAP" id="MF_00731">
    <property type="entry name" value="MenE"/>
    <property type="match status" value="1"/>
</dbReference>
<dbReference type="InterPro" id="IPR025110">
    <property type="entry name" value="AMP-bd_C"/>
</dbReference>
<dbReference type="InterPro" id="IPR045851">
    <property type="entry name" value="AMP-bd_C_sf"/>
</dbReference>
<dbReference type="InterPro" id="IPR020845">
    <property type="entry name" value="AMP-binding_CS"/>
</dbReference>
<dbReference type="InterPro" id="IPR000873">
    <property type="entry name" value="AMP-dep_synth/lig_dom"/>
</dbReference>
<dbReference type="InterPro" id="IPR042099">
    <property type="entry name" value="ANL_N_sf"/>
</dbReference>
<dbReference type="InterPro" id="IPR010192">
    <property type="entry name" value="MenE"/>
</dbReference>
<dbReference type="NCBIfam" id="TIGR01923">
    <property type="entry name" value="menE"/>
    <property type="match status" value="1"/>
</dbReference>
<dbReference type="NCBIfam" id="NF002966">
    <property type="entry name" value="PRK03640.1"/>
    <property type="match status" value="1"/>
</dbReference>
<dbReference type="PANTHER" id="PTHR43201:SF32">
    <property type="entry name" value="2-SUCCINYLBENZOATE--COA LIGASE, CHLOROPLASTIC_PEROXISOMAL"/>
    <property type="match status" value="1"/>
</dbReference>
<dbReference type="PANTHER" id="PTHR43201">
    <property type="entry name" value="ACYL-COA SYNTHETASE"/>
    <property type="match status" value="1"/>
</dbReference>
<dbReference type="Pfam" id="PF00501">
    <property type="entry name" value="AMP-binding"/>
    <property type="match status" value="1"/>
</dbReference>
<dbReference type="Pfam" id="PF13193">
    <property type="entry name" value="AMP-binding_C"/>
    <property type="match status" value="1"/>
</dbReference>
<dbReference type="SUPFAM" id="SSF56801">
    <property type="entry name" value="Acetyl-CoA synthetase-like"/>
    <property type="match status" value="1"/>
</dbReference>
<dbReference type="PROSITE" id="PS00455">
    <property type="entry name" value="AMP_BINDING"/>
    <property type="match status" value="1"/>
</dbReference>
<gene>
    <name evidence="1" type="primary">menE</name>
    <name type="ordered locus">RBAM_027770</name>
</gene>